<keyword id="KW-0238">DNA-binding</keyword>
<keyword id="KW-0804">Transcription</keyword>
<keyword id="KW-0805">Transcription regulation</keyword>
<protein>
    <recommendedName>
        <fullName evidence="1">Transcription factor E</fullName>
        <shortName evidence="1">TFE</shortName>
    </recommendedName>
    <alternativeName>
        <fullName evidence="1">TFIIE subunit alpha homolog</fullName>
    </alternativeName>
    <alternativeName>
        <fullName evidence="1">Transcription initiation factor TFIIE</fullName>
    </alternativeName>
</protein>
<feature type="chain" id="PRO_0000326616" description="Transcription factor E">
    <location>
        <begin position="1"/>
        <end position="170"/>
    </location>
</feature>
<feature type="domain" description="HTH TFE/IIEalpha-type" evidence="1">
    <location>
        <begin position="1"/>
        <end position="93"/>
    </location>
</feature>
<reference key="1">
    <citation type="submission" date="2007-04" db="EMBL/GenBank/DDBJ databases">
        <title>Complete sequence of Pyrobaculum arsenaticum DSM 13514.</title>
        <authorList>
            <consortium name="US DOE Joint Genome Institute"/>
            <person name="Copeland A."/>
            <person name="Lucas S."/>
            <person name="Lapidus A."/>
            <person name="Barry K."/>
            <person name="Glavina del Rio T."/>
            <person name="Dalin E."/>
            <person name="Tice H."/>
            <person name="Pitluck S."/>
            <person name="Chain P."/>
            <person name="Malfatti S."/>
            <person name="Shin M."/>
            <person name="Vergez L."/>
            <person name="Schmutz J."/>
            <person name="Larimer F."/>
            <person name="Land M."/>
            <person name="Hauser L."/>
            <person name="Kyrpides N."/>
            <person name="Mikhailova N."/>
            <person name="Cozen A.E."/>
            <person name="Fitz-Gibbon S.T."/>
            <person name="House C.H."/>
            <person name="Saltikov C."/>
            <person name="Lowe T.M."/>
            <person name="Richardson P."/>
        </authorList>
    </citation>
    <scope>NUCLEOTIDE SEQUENCE [LARGE SCALE GENOMIC DNA]</scope>
    <source>
        <strain>ATCC 700994 / DSM 13514 / JCM 11321 / PZ6</strain>
    </source>
</reference>
<sequence length="170" mass="20040">MKDAYLYVVEKSVAWEFDSPEYGRLARKIVELLYERKEDLTDDRIAILLNISTAETRRILQYLMKLNLIGVRKKTTEDYRIEYAWYVDDEIIRQAISSRARVVREKLSMLIRSLTEGAYYICPSCFIRYSLDEAVNWGGTCPICGTQLEYVENVEEINKLTKIFEKLEKL</sequence>
<name>TFE_PYRAR</name>
<organism>
    <name type="scientific">Pyrobaculum arsenaticum (strain DSM 13514 / JCM 11321 / PZ6)</name>
    <dbReference type="NCBI Taxonomy" id="340102"/>
    <lineage>
        <taxon>Archaea</taxon>
        <taxon>Thermoproteota</taxon>
        <taxon>Thermoprotei</taxon>
        <taxon>Thermoproteales</taxon>
        <taxon>Thermoproteaceae</taxon>
        <taxon>Pyrobaculum</taxon>
    </lineage>
</organism>
<dbReference type="EMBL" id="CP000660">
    <property type="protein sequence ID" value="ABP49652.1"/>
    <property type="molecule type" value="Genomic_DNA"/>
</dbReference>
<dbReference type="SMR" id="A4WGY5"/>
<dbReference type="STRING" id="340102.Pars_0035"/>
<dbReference type="KEGG" id="pas:Pars_0035"/>
<dbReference type="HOGENOM" id="CLU_100097_1_0_2"/>
<dbReference type="OrthoDB" id="5935at2157"/>
<dbReference type="PhylomeDB" id="A4WGY5"/>
<dbReference type="Proteomes" id="UP000001567">
    <property type="component" value="Chromosome"/>
</dbReference>
<dbReference type="GO" id="GO:0003677">
    <property type="term" value="F:DNA binding"/>
    <property type="evidence" value="ECO:0007669"/>
    <property type="project" value="UniProtKB-KW"/>
</dbReference>
<dbReference type="GO" id="GO:0006355">
    <property type="term" value="P:regulation of DNA-templated transcription"/>
    <property type="evidence" value="ECO:0007669"/>
    <property type="project" value="InterPro"/>
</dbReference>
<dbReference type="GO" id="GO:0006367">
    <property type="term" value="P:transcription initiation at RNA polymerase II promoter"/>
    <property type="evidence" value="ECO:0007669"/>
    <property type="project" value="InterPro"/>
</dbReference>
<dbReference type="Gene3D" id="1.10.10.10">
    <property type="entry name" value="Winged helix-like DNA-binding domain superfamily/Winged helix DNA-binding domain"/>
    <property type="match status" value="1"/>
</dbReference>
<dbReference type="HAMAP" id="MF_01909">
    <property type="entry name" value="TFE_arch"/>
    <property type="match status" value="1"/>
</dbReference>
<dbReference type="InterPro" id="IPR016481">
    <property type="entry name" value="TF_E_archaea"/>
</dbReference>
<dbReference type="InterPro" id="IPR017919">
    <property type="entry name" value="TFIIE/TFIIEa_HTH"/>
</dbReference>
<dbReference type="InterPro" id="IPR002853">
    <property type="entry name" value="TFIIE_asu"/>
</dbReference>
<dbReference type="InterPro" id="IPR024550">
    <property type="entry name" value="TFIIEa/SarR/Rpc3_HTH_dom"/>
</dbReference>
<dbReference type="InterPro" id="IPR036388">
    <property type="entry name" value="WH-like_DNA-bd_sf"/>
</dbReference>
<dbReference type="InterPro" id="IPR036390">
    <property type="entry name" value="WH_DNA-bd_sf"/>
</dbReference>
<dbReference type="Pfam" id="PF02002">
    <property type="entry name" value="TFIIE_alpha"/>
    <property type="match status" value="1"/>
</dbReference>
<dbReference type="PIRSF" id="PIRSF006373">
    <property type="entry name" value="TF_E_archaea"/>
    <property type="match status" value="1"/>
</dbReference>
<dbReference type="SMART" id="SM00531">
    <property type="entry name" value="TFIIE"/>
    <property type="match status" value="1"/>
</dbReference>
<dbReference type="SUPFAM" id="SSF46785">
    <property type="entry name" value="Winged helix' DNA-binding domain"/>
    <property type="match status" value="1"/>
</dbReference>
<dbReference type="PROSITE" id="PS51344">
    <property type="entry name" value="HTH_TFE_IIE"/>
    <property type="match status" value="1"/>
</dbReference>
<evidence type="ECO:0000255" key="1">
    <source>
        <dbReference type="HAMAP-Rule" id="MF_01909"/>
    </source>
</evidence>
<comment type="function">
    <text evidence="1">Transcription factor that plays a role in the activation of archaeal genes transcribed by RNA polymerase. Facilitates transcription initiation by enhancing TATA-box recognition by TATA-box-binding protein (Tbp), and transcription factor B (Tfb) and RNA polymerase recruitment. Not absolutely required for transcription in vitro, but particularly important in cases where Tbp or Tfb function is not optimal. It dynamically alters the nucleic acid-binding properties of RNA polymerases by stabilizing the initiation complex and destabilizing elongation complexes. Seems to translocate with the RNA polymerase following initiation and acts by binding to the non template strand of the transcription bubble in elongation complexes.</text>
</comment>
<comment type="subunit">
    <text evidence="1">Monomer. Interaction with RNA polymerase subunits RpoF and RpoE is necessary for Tfe stimulatory transcription activity. Able to interact with Tbp and RNA polymerase in the absence of DNA promoter. Interacts both with the preinitiation and elongation complexes.</text>
</comment>
<comment type="domain">
    <text evidence="1">The winged helix domain is involved in binding to DNA in the preinitiation complex.</text>
</comment>
<comment type="similarity">
    <text evidence="1">Belongs to the TFE family.</text>
</comment>
<proteinExistence type="inferred from homology"/>
<gene>
    <name evidence="1" type="primary">tfe</name>
    <name type="ordered locus">Pars_0035</name>
</gene>
<accession>A4WGY5</accession>